<keyword id="KW-0687">Ribonucleoprotein</keyword>
<keyword id="KW-0689">Ribosomal protein</keyword>
<comment type="similarity">
    <text evidence="1">Belongs to the bacterial ribosomal protein bL34 family.</text>
</comment>
<organism>
    <name type="scientific">Thermobifida fusca (strain YX)</name>
    <dbReference type="NCBI Taxonomy" id="269800"/>
    <lineage>
        <taxon>Bacteria</taxon>
        <taxon>Bacillati</taxon>
        <taxon>Actinomycetota</taxon>
        <taxon>Actinomycetes</taxon>
        <taxon>Streptosporangiales</taxon>
        <taxon>Nocardiopsidaceae</taxon>
        <taxon>Thermobifida</taxon>
    </lineage>
</organism>
<dbReference type="EMBL" id="CP000088">
    <property type="protein sequence ID" value="AAZ57150.1"/>
    <property type="molecule type" value="Genomic_DNA"/>
</dbReference>
<dbReference type="SMR" id="Q47K72"/>
<dbReference type="STRING" id="269800.Tfu_3117"/>
<dbReference type="KEGG" id="tfu:Tfu_3117"/>
<dbReference type="eggNOG" id="COG0230">
    <property type="taxonomic scope" value="Bacteria"/>
</dbReference>
<dbReference type="HOGENOM" id="CLU_129938_2_1_11"/>
<dbReference type="GO" id="GO:1990904">
    <property type="term" value="C:ribonucleoprotein complex"/>
    <property type="evidence" value="ECO:0007669"/>
    <property type="project" value="UniProtKB-KW"/>
</dbReference>
<dbReference type="GO" id="GO:0005840">
    <property type="term" value="C:ribosome"/>
    <property type="evidence" value="ECO:0007669"/>
    <property type="project" value="UniProtKB-KW"/>
</dbReference>
<dbReference type="GO" id="GO:0003735">
    <property type="term" value="F:structural constituent of ribosome"/>
    <property type="evidence" value="ECO:0007669"/>
    <property type="project" value="InterPro"/>
</dbReference>
<dbReference type="GO" id="GO:0006412">
    <property type="term" value="P:translation"/>
    <property type="evidence" value="ECO:0007669"/>
    <property type="project" value="UniProtKB-UniRule"/>
</dbReference>
<dbReference type="FunFam" id="1.10.287.3980:FF:000001">
    <property type="entry name" value="Mitochondrial ribosomal protein L34"/>
    <property type="match status" value="1"/>
</dbReference>
<dbReference type="Gene3D" id="1.10.287.3980">
    <property type="match status" value="1"/>
</dbReference>
<dbReference type="HAMAP" id="MF_00391">
    <property type="entry name" value="Ribosomal_bL34"/>
    <property type="match status" value="1"/>
</dbReference>
<dbReference type="InterPro" id="IPR000271">
    <property type="entry name" value="Ribosomal_bL34"/>
</dbReference>
<dbReference type="InterPro" id="IPR020939">
    <property type="entry name" value="Ribosomal_bL34_CS"/>
</dbReference>
<dbReference type="NCBIfam" id="TIGR01030">
    <property type="entry name" value="rpmH_bact"/>
    <property type="match status" value="1"/>
</dbReference>
<dbReference type="PANTHER" id="PTHR14503:SF4">
    <property type="entry name" value="LARGE RIBOSOMAL SUBUNIT PROTEIN BL34M"/>
    <property type="match status" value="1"/>
</dbReference>
<dbReference type="PANTHER" id="PTHR14503">
    <property type="entry name" value="MITOCHONDRIAL RIBOSOMAL PROTEIN 34 FAMILY MEMBER"/>
    <property type="match status" value="1"/>
</dbReference>
<dbReference type="Pfam" id="PF00468">
    <property type="entry name" value="Ribosomal_L34"/>
    <property type="match status" value="1"/>
</dbReference>
<dbReference type="PROSITE" id="PS00784">
    <property type="entry name" value="RIBOSOMAL_L34"/>
    <property type="match status" value="1"/>
</dbReference>
<name>RL34_THEFY</name>
<feature type="chain" id="PRO_1000013482" description="Large ribosomal subunit protein bL34">
    <location>
        <begin position="1"/>
        <end position="47"/>
    </location>
</feature>
<protein>
    <recommendedName>
        <fullName evidence="1">Large ribosomal subunit protein bL34</fullName>
    </recommendedName>
    <alternativeName>
        <fullName evidence="2">50S ribosomal protein L34</fullName>
    </alternativeName>
</protein>
<gene>
    <name evidence="1" type="primary">rpmH</name>
    <name type="ordered locus">Tfu_3117</name>
</gene>
<proteinExistence type="inferred from homology"/>
<reference key="1">
    <citation type="journal article" date="2007" name="J. Bacteriol.">
        <title>Genome sequence and analysis of the soil cellulolytic actinomycete Thermobifida fusca YX.</title>
        <authorList>
            <person name="Lykidis A."/>
            <person name="Mavromatis K."/>
            <person name="Ivanova N."/>
            <person name="Anderson I."/>
            <person name="Land M."/>
            <person name="DiBartolo G."/>
            <person name="Martinez M."/>
            <person name="Lapidus A."/>
            <person name="Lucas S."/>
            <person name="Copeland A."/>
            <person name="Richardson P."/>
            <person name="Wilson D.B."/>
            <person name="Kyrpides N."/>
        </authorList>
    </citation>
    <scope>NUCLEOTIDE SEQUENCE [LARGE SCALE GENOMIC DNA]</scope>
    <source>
        <strain>YX</strain>
    </source>
</reference>
<sequence>MSKRTYQPNNRRRARTHGFRLRMRTRAGRAIIAARRRKGRKALTVSH</sequence>
<evidence type="ECO:0000255" key="1">
    <source>
        <dbReference type="HAMAP-Rule" id="MF_00391"/>
    </source>
</evidence>
<evidence type="ECO:0000305" key="2"/>
<accession>Q47K72</accession>